<gene>
    <name type="primary">mazE</name>
    <name type="ordered locus">MW1993</name>
</gene>
<comment type="function">
    <text evidence="1">Antitoxin component of a type II toxin-antitoxin (TA) system. Labile antitoxin that binds to cognate MazF toxin and counteracts its endoribonuclease activity.</text>
</comment>
<comment type="subunit">
    <text evidence="1">Forms a complex with cognate toxin MazF which inhibits the endoribonuclease activity of MazF.</text>
</comment>
<comment type="similarity">
    <text evidence="2">Belongs to the MazE/EndoAI family.</text>
</comment>
<dbReference type="EMBL" id="BA000033">
    <property type="protein sequence ID" value="BAB95858.1"/>
    <property type="molecule type" value="Genomic_DNA"/>
</dbReference>
<dbReference type="RefSeq" id="WP_000948331.1">
    <property type="nucleotide sequence ID" value="NC_003923.1"/>
</dbReference>
<dbReference type="SMR" id="Q7A0D6"/>
<dbReference type="GeneID" id="98346377"/>
<dbReference type="KEGG" id="sam:MW1993"/>
<dbReference type="HOGENOM" id="CLU_3012108_0_0_9"/>
<dbReference type="GO" id="GO:0006355">
    <property type="term" value="P:regulation of DNA-templated transcription"/>
    <property type="evidence" value="ECO:0007669"/>
    <property type="project" value="InterPro"/>
</dbReference>
<dbReference type="Gene3D" id="1.10.1220.10">
    <property type="entry name" value="Met repressor-like"/>
    <property type="match status" value="1"/>
</dbReference>
<dbReference type="InterPro" id="IPR013321">
    <property type="entry name" value="Arc_rbn_hlx_hlx"/>
</dbReference>
<dbReference type="InterPro" id="IPR048242">
    <property type="entry name" value="MazE"/>
</dbReference>
<dbReference type="NCBIfam" id="NF041459">
    <property type="entry name" value="antitoxMazE_Staph"/>
    <property type="match status" value="1"/>
</dbReference>
<name>MAZE_STAAW</name>
<reference key="1">
    <citation type="journal article" date="2002" name="Lancet">
        <title>Genome and virulence determinants of high virulence community-acquired MRSA.</title>
        <authorList>
            <person name="Baba T."/>
            <person name="Takeuchi F."/>
            <person name="Kuroda M."/>
            <person name="Yuzawa H."/>
            <person name="Aoki K."/>
            <person name="Oguchi A."/>
            <person name="Nagai Y."/>
            <person name="Iwama N."/>
            <person name="Asano K."/>
            <person name="Naimi T."/>
            <person name="Kuroda H."/>
            <person name="Cui L."/>
            <person name="Yamamoto K."/>
            <person name="Hiramatsu K."/>
        </authorList>
    </citation>
    <scope>NUCLEOTIDE SEQUENCE [LARGE SCALE GENOMIC DNA]</scope>
    <source>
        <strain>MW2</strain>
    </source>
</reference>
<accession>Q7A0D6</accession>
<sequence length="56" mass="6252">MLSFSQNRSHSLEQSLKEGYSQMADLNLSLANEAFPIECEACDCNETYLSSNSTNE</sequence>
<evidence type="ECO:0000250" key="1">
    <source>
        <dbReference type="UniProtKB" id="P0C7B4"/>
    </source>
</evidence>
<evidence type="ECO:0000305" key="2"/>
<protein>
    <recommendedName>
        <fullName>Antitoxin MazE</fullName>
    </recommendedName>
</protein>
<feature type="chain" id="PRO_0000330716" description="Antitoxin MazE">
    <location>
        <begin position="1"/>
        <end position="56"/>
    </location>
</feature>
<organism>
    <name type="scientific">Staphylococcus aureus (strain MW2)</name>
    <dbReference type="NCBI Taxonomy" id="196620"/>
    <lineage>
        <taxon>Bacteria</taxon>
        <taxon>Bacillati</taxon>
        <taxon>Bacillota</taxon>
        <taxon>Bacilli</taxon>
        <taxon>Bacillales</taxon>
        <taxon>Staphylococcaceae</taxon>
        <taxon>Staphylococcus</taxon>
    </lineage>
</organism>
<keyword id="KW-1277">Toxin-antitoxin system</keyword>
<proteinExistence type="inferred from homology"/>